<sequence length="202" mass="22614">MTSTQSVAVYATLILAIFCFNDIHCDPIAEARAAAFGEREARSAGEWKQFDVNGEKVEVNEQENREIIRQAGGDGVEGSVMVIDHAKGLIIWSIPRAGECYLIGGVDKQLPDAQELLHYFRSAQGSADGEGVQSALDYVKAEDRPVTDLNLLAPEVREACQGKSVYWLEKSSGDNNEPEKRRWCVYAYVRIRGVLVRYRRCW</sequence>
<feature type="signal peptide" evidence="2 7">
    <location>
        <begin position="1"/>
        <end position="25"/>
    </location>
</feature>
<feature type="propeptide" id="PRO_0000020733" evidence="2 4">
    <location>
        <begin position="26"/>
        <end position="181"/>
    </location>
</feature>
<feature type="peptide" id="PRO_0000020734" description="Arenicin-2" evidence="4">
    <location>
        <begin position="182"/>
        <end position="202"/>
    </location>
</feature>
<feature type="domain" description="BRICHOS" evidence="3">
    <location>
        <begin position="73"/>
        <end position="168"/>
    </location>
</feature>
<feature type="disulfide bond" evidence="1">
    <location>
        <begin position="100"/>
        <end position="160"/>
    </location>
</feature>
<feature type="disulfide bond" evidence="4 5">
    <location>
        <begin position="184"/>
        <end position="201"/>
    </location>
</feature>
<feature type="strand" evidence="8">
    <location>
        <begin position="184"/>
        <end position="191"/>
    </location>
</feature>
<feature type="strand" evidence="8">
    <location>
        <begin position="194"/>
        <end position="201"/>
    </location>
</feature>
<accession>Q5SC59</accession>
<accession>P84106</accession>
<name>ANN2_AREMA</name>
<reference evidence="6 7" key="1">
    <citation type="journal article" date="2004" name="FEBS Lett.">
        <title>Purification and primary structure of two isoforms of arenicin, a novel antimicrobial peptide from marine polychaeta Arenicola marina.</title>
        <authorList>
            <person name="Ovchinnikova T.V."/>
            <person name="Aleshina G.M."/>
            <person name="Balandin S.V."/>
            <person name="Krasnosdembskaya A.D."/>
            <person name="Markelov M.L."/>
            <person name="Frolova E.I."/>
            <person name="Leonova Y.F."/>
            <person name="Tagaev A.A."/>
            <person name="Krasnodembsky E.G."/>
            <person name="Kokryakov V.N."/>
        </authorList>
    </citation>
    <scope>NUCLEOTIDE SEQUENCE [MRNA]</scope>
    <scope>PROTEIN SEQUENCE OF 182-202</scope>
    <scope>FUNCTION</scope>
    <scope>MASS SPECTROMETRY</scope>
    <scope>DISULFIDE BOND</scope>
    <source>
        <tissue evidence="4">Coelomocyte</tissue>
    </source>
</reference>
<reference key="2">
    <citation type="journal article" date="2008" name="Biochem. J.">
        <title>Structure and mode of action of the antimicrobial peptide arenicin.</title>
        <authorList>
            <person name="Andra J."/>
            <person name="Jakovkin I."/>
            <person name="Grotzinger J."/>
            <person name="Hecht O."/>
            <person name="Krasnosdembskaya A.D."/>
            <person name="Goldmann T."/>
            <person name="Gutsmann T."/>
            <person name="Leippe M."/>
        </authorList>
    </citation>
    <scope>STRUCTURE BY NMR OF 182-202</scope>
    <scope>FUNCTION</scope>
    <scope>DISULFIDE BOND</scope>
</reference>
<evidence type="ECO:0000250" key="1"/>
<evidence type="ECO:0000255" key="2"/>
<evidence type="ECO:0000255" key="3">
    <source>
        <dbReference type="PROSITE-ProRule" id="PRU00255"/>
    </source>
</evidence>
<evidence type="ECO:0000269" key="4">
    <source>
    </source>
</evidence>
<evidence type="ECO:0000269" key="5">
    <source>
    </source>
</evidence>
<evidence type="ECO:0000305" key="6"/>
<evidence type="ECO:0000312" key="7">
    <source>
        <dbReference type="EMBL" id="AAV65143.1"/>
    </source>
</evidence>
<evidence type="ECO:0007829" key="8">
    <source>
        <dbReference type="PDB" id="2JNI"/>
    </source>
</evidence>
<proteinExistence type="evidence at protein level"/>
<dbReference type="EMBL" id="AY684857">
    <property type="protein sequence ID" value="AAV65143.1"/>
    <property type="molecule type" value="mRNA"/>
</dbReference>
<dbReference type="PDB" id="2JNI">
    <property type="method" value="NMR"/>
    <property type="chains" value="A=182-202"/>
</dbReference>
<dbReference type="PDB" id="2L8X">
    <property type="method" value="NMR"/>
    <property type="chains" value="A/B=182-202"/>
</dbReference>
<dbReference type="PDBsum" id="2JNI"/>
<dbReference type="PDBsum" id="2L8X"/>
<dbReference type="BMRB" id="Q5SC59"/>
<dbReference type="SMR" id="Q5SC59"/>
<dbReference type="EvolutionaryTrace" id="Q5SC59"/>
<dbReference type="GO" id="GO:0042742">
    <property type="term" value="P:defense response to bacterium"/>
    <property type="evidence" value="ECO:0007669"/>
    <property type="project" value="UniProtKB-KW"/>
</dbReference>
<dbReference type="GO" id="GO:0050832">
    <property type="term" value="P:defense response to fungus"/>
    <property type="evidence" value="ECO:0007669"/>
    <property type="project" value="UniProtKB-KW"/>
</dbReference>
<dbReference type="GO" id="GO:0031640">
    <property type="term" value="P:killing of cells of another organism"/>
    <property type="evidence" value="ECO:0007669"/>
    <property type="project" value="UniProtKB-KW"/>
</dbReference>
<dbReference type="Gene3D" id="3.30.390.150">
    <property type="match status" value="1"/>
</dbReference>
<dbReference type="InterPro" id="IPR007084">
    <property type="entry name" value="BRICHOS_dom"/>
</dbReference>
<dbReference type="Pfam" id="PF04089">
    <property type="entry name" value="BRICHOS"/>
    <property type="match status" value="1"/>
</dbReference>
<dbReference type="PROSITE" id="PS50869">
    <property type="entry name" value="BRICHOS"/>
    <property type="match status" value="1"/>
</dbReference>
<organism>
    <name type="scientific">Arenicola marina</name>
    <name type="common">Lugworm</name>
    <name type="synonym">Lumbricus marinus</name>
    <dbReference type="NCBI Taxonomy" id="6344"/>
    <lineage>
        <taxon>Eukaryota</taxon>
        <taxon>Metazoa</taxon>
        <taxon>Spiralia</taxon>
        <taxon>Lophotrochozoa</taxon>
        <taxon>Annelida</taxon>
        <taxon>Polychaeta</taxon>
        <taxon>Sedentaria</taxon>
        <taxon>Scolecida</taxon>
        <taxon>Arenicolidae</taxon>
        <taxon>Arenicola</taxon>
    </lineage>
</organism>
<protein>
    <recommendedName>
        <fullName>Arenicin-2</fullName>
    </recommendedName>
</protein>
<comment type="function">
    <text evidence="4 5">Has antimicrobial activity against the Gram-negative bacteria E.coli and P.mirabilis, the Gram-positive bacterium L.monocytogenes and the yeast C.albicans.</text>
</comment>
<comment type="mass spectrometry" mass="2772.3" method="MALDI" evidence="4"/>
<keyword id="KW-0002">3D-structure</keyword>
<keyword id="KW-0044">Antibiotic</keyword>
<keyword id="KW-0929">Antimicrobial</keyword>
<keyword id="KW-0165">Cleavage on pair of basic residues</keyword>
<keyword id="KW-0903">Direct protein sequencing</keyword>
<keyword id="KW-1015">Disulfide bond</keyword>
<keyword id="KW-0295">Fungicide</keyword>
<keyword id="KW-0732">Signal</keyword>